<proteinExistence type="inferred from homology"/>
<dbReference type="EMBL" id="CP000712">
    <property type="protein sequence ID" value="ABQ77149.1"/>
    <property type="molecule type" value="Genomic_DNA"/>
</dbReference>
<dbReference type="SMR" id="A5VZ39"/>
<dbReference type="KEGG" id="ppf:Pput_0988"/>
<dbReference type="eggNOG" id="COG1660">
    <property type="taxonomic scope" value="Bacteria"/>
</dbReference>
<dbReference type="HOGENOM" id="CLU_059558_1_1_6"/>
<dbReference type="GO" id="GO:0005524">
    <property type="term" value="F:ATP binding"/>
    <property type="evidence" value="ECO:0007669"/>
    <property type="project" value="UniProtKB-UniRule"/>
</dbReference>
<dbReference type="GO" id="GO:0005525">
    <property type="term" value="F:GTP binding"/>
    <property type="evidence" value="ECO:0007669"/>
    <property type="project" value="UniProtKB-UniRule"/>
</dbReference>
<dbReference type="Gene3D" id="3.40.50.300">
    <property type="entry name" value="P-loop containing nucleotide triphosphate hydrolases"/>
    <property type="match status" value="1"/>
</dbReference>
<dbReference type="HAMAP" id="MF_00636">
    <property type="entry name" value="RapZ_like"/>
    <property type="match status" value="1"/>
</dbReference>
<dbReference type="InterPro" id="IPR027417">
    <property type="entry name" value="P-loop_NTPase"/>
</dbReference>
<dbReference type="InterPro" id="IPR005337">
    <property type="entry name" value="RapZ-like"/>
</dbReference>
<dbReference type="InterPro" id="IPR053930">
    <property type="entry name" value="RapZ-like_N"/>
</dbReference>
<dbReference type="InterPro" id="IPR053931">
    <property type="entry name" value="RapZ_C"/>
</dbReference>
<dbReference type="NCBIfam" id="NF003828">
    <property type="entry name" value="PRK05416.1"/>
    <property type="match status" value="1"/>
</dbReference>
<dbReference type="PANTHER" id="PTHR30448">
    <property type="entry name" value="RNASE ADAPTER PROTEIN RAPZ"/>
    <property type="match status" value="1"/>
</dbReference>
<dbReference type="PANTHER" id="PTHR30448:SF0">
    <property type="entry name" value="RNASE ADAPTER PROTEIN RAPZ"/>
    <property type="match status" value="1"/>
</dbReference>
<dbReference type="Pfam" id="PF22740">
    <property type="entry name" value="PapZ_C"/>
    <property type="match status" value="1"/>
</dbReference>
<dbReference type="Pfam" id="PF03668">
    <property type="entry name" value="RapZ-like_N"/>
    <property type="match status" value="1"/>
</dbReference>
<dbReference type="PIRSF" id="PIRSF005052">
    <property type="entry name" value="P-loopkin"/>
    <property type="match status" value="1"/>
</dbReference>
<dbReference type="SUPFAM" id="SSF52540">
    <property type="entry name" value="P-loop containing nucleoside triphosphate hydrolases"/>
    <property type="match status" value="1"/>
</dbReference>
<gene>
    <name type="ordered locus">Pput_0988</name>
</gene>
<accession>A5VZ39</accession>
<organism>
    <name type="scientific">Pseudomonas putida (strain ATCC 700007 / DSM 6899 / JCM 31910 / BCRC 17059 / LMG 24140 / F1)</name>
    <dbReference type="NCBI Taxonomy" id="351746"/>
    <lineage>
        <taxon>Bacteria</taxon>
        <taxon>Pseudomonadati</taxon>
        <taxon>Pseudomonadota</taxon>
        <taxon>Gammaproteobacteria</taxon>
        <taxon>Pseudomonadales</taxon>
        <taxon>Pseudomonadaceae</taxon>
        <taxon>Pseudomonas</taxon>
    </lineage>
</organism>
<reference key="1">
    <citation type="submission" date="2007-05" db="EMBL/GenBank/DDBJ databases">
        <title>Complete sequence of Pseudomonas putida F1.</title>
        <authorList>
            <consortium name="US DOE Joint Genome Institute"/>
            <person name="Copeland A."/>
            <person name="Lucas S."/>
            <person name="Lapidus A."/>
            <person name="Barry K."/>
            <person name="Detter J.C."/>
            <person name="Glavina del Rio T."/>
            <person name="Hammon N."/>
            <person name="Israni S."/>
            <person name="Dalin E."/>
            <person name="Tice H."/>
            <person name="Pitluck S."/>
            <person name="Chain P."/>
            <person name="Malfatti S."/>
            <person name="Shin M."/>
            <person name="Vergez L."/>
            <person name="Schmutz J."/>
            <person name="Larimer F."/>
            <person name="Land M."/>
            <person name="Hauser L."/>
            <person name="Kyrpides N."/>
            <person name="Lykidis A."/>
            <person name="Parales R."/>
            <person name="Richardson P."/>
        </authorList>
    </citation>
    <scope>NUCLEOTIDE SEQUENCE [LARGE SCALE GENOMIC DNA]</scope>
    <source>
        <strain>ATCC 700007 / DSM 6899 / JCM 31910 / BCRC 17059 / LMG 24140 / F1</strain>
    </source>
</reference>
<evidence type="ECO:0000255" key="1">
    <source>
        <dbReference type="HAMAP-Rule" id="MF_00636"/>
    </source>
</evidence>
<protein>
    <recommendedName>
        <fullName evidence="1">Nucleotide-binding protein Pput_0988</fullName>
    </recommendedName>
</protein>
<comment type="function">
    <text evidence="1">Displays ATPase and GTPase activities.</text>
</comment>
<comment type="similarity">
    <text evidence="1">Belongs to the RapZ-like family.</text>
</comment>
<sequence length="284" mass="32070">MRLIIVSGRSGSGKSTALDVLEDSGFYCIDNLPAGLLPQLAENALINTELLQPKVAVSIDARNLPSHLMRFPELLEEARARHIQCDVLYLDADEEVLLKRFSETRRRHPLTNANRSLAEAIRVESDLLGPIADLADLKIDTTNLNLYQLRDSIKLRLLNQPEPGTAFLVESFGFKRGMPVDADLVFDVRCLPNPYWKPELREHSGLDQPVIDYLAAQPDVEDMYNDISSYLLKWLPRFAASNRAYVTIAIGCTGGHHRSVYITERLGQQLQQTLKNVQVRHRDL</sequence>
<name>Y988_PSEP1</name>
<feature type="chain" id="PRO_1000061440" description="Nucleotide-binding protein Pput_0988">
    <location>
        <begin position="1"/>
        <end position="284"/>
    </location>
</feature>
<feature type="binding site" evidence="1">
    <location>
        <begin position="8"/>
        <end position="15"/>
    </location>
    <ligand>
        <name>ATP</name>
        <dbReference type="ChEBI" id="CHEBI:30616"/>
    </ligand>
</feature>
<feature type="binding site" evidence="1">
    <location>
        <begin position="60"/>
        <end position="63"/>
    </location>
    <ligand>
        <name>GTP</name>
        <dbReference type="ChEBI" id="CHEBI:37565"/>
    </ligand>
</feature>
<keyword id="KW-0067">ATP-binding</keyword>
<keyword id="KW-0342">GTP-binding</keyword>
<keyword id="KW-0547">Nucleotide-binding</keyword>